<organism>
    <name type="scientific">Proteus mirabilis (strain HI4320)</name>
    <dbReference type="NCBI Taxonomy" id="529507"/>
    <lineage>
        <taxon>Bacteria</taxon>
        <taxon>Pseudomonadati</taxon>
        <taxon>Pseudomonadota</taxon>
        <taxon>Gammaproteobacteria</taxon>
        <taxon>Enterobacterales</taxon>
        <taxon>Morganellaceae</taxon>
        <taxon>Proteus</taxon>
    </lineage>
</organism>
<keyword id="KW-0066">ATP synthesis</keyword>
<keyword id="KW-0067">ATP-binding</keyword>
<keyword id="KW-0997">Cell inner membrane</keyword>
<keyword id="KW-1003">Cell membrane</keyword>
<keyword id="KW-0139">CF(1)</keyword>
<keyword id="KW-0375">Hydrogen ion transport</keyword>
<keyword id="KW-0406">Ion transport</keyword>
<keyword id="KW-0472">Membrane</keyword>
<keyword id="KW-0547">Nucleotide-binding</keyword>
<keyword id="KW-1185">Reference proteome</keyword>
<keyword id="KW-1278">Translocase</keyword>
<keyword id="KW-0813">Transport</keyword>
<reference key="1">
    <citation type="journal article" date="2008" name="J. Bacteriol.">
        <title>Complete genome sequence of uropathogenic Proteus mirabilis, a master of both adherence and motility.</title>
        <authorList>
            <person name="Pearson M.M."/>
            <person name="Sebaihia M."/>
            <person name="Churcher C."/>
            <person name="Quail M.A."/>
            <person name="Seshasayee A.S."/>
            <person name="Luscombe N.M."/>
            <person name="Abdellah Z."/>
            <person name="Arrosmith C."/>
            <person name="Atkin B."/>
            <person name="Chillingworth T."/>
            <person name="Hauser H."/>
            <person name="Jagels K."/>
            <person name="Moule S."/>
            <person name="Mungall K."/>
            <person name="Norbertczak H."/>
            <person name="Rabbinowitsch E."/>
            <person name="Walker D."/>
            <person name="Whithead S."/>
            <person name="Thomson N.R."/>
            <person name="Rather P.N."/>
            <person name="Parkhill J."/>
            <person name="Mobley H.L.T."/>
        </authorList>
    </citation>
    <scope>NUCLEOTIDE SEQUENCE [LARGE SCALE GENOMIC DNA]</scope>
    <source>
        <strain>HI4320</strain>
    </source>
</reference>
<feature type="chain" id="PRO_1000143422" description="ATP synthase subunit alpha">
    <location>
        <begin position="1"/>
        <end position="513"/>
    </location>
</feature>
<feature type="binding site" evidence="1">
    <location>
        <begin position="169"/>
        <end position="176"/>
    </location>
    <ligand>
        <name>ATP</name>
        <dbReference type="ChEBI" id="CHEBI:30616"/>
    </ligand>
</feature>
<feature type="site" description="Required for activity" evidence="1">
    <location>
        <position position="373"/>
    </location>
</feature>
<gene>
    <name evidence="1" type="primary">atpA</name>
    <name type="ordered locus">PMI3062</name>
</gene>
<name>ATPA_PROMH</name>
<evidence type="ECO:0000255" key="1">
    <source>
        <dbReference type="HAMAP-Rule" id="MF_01346"/>
    </source>
</evidence>
<protein>
    <recommendedName>
        <fullName evidence="1">ATP synthase subunit alpha</fullName>
        <ecNumber evidence="1">7.1.2.2</ecNumber>
    </recommendedName>
    <alternativeName>
        <fullName evidence="1">ATP synthase F1 sector subunit alpha</fullName>
    </alternativeName>
    <alternativeName>
        <fullName evidence="1">F-ATPase subunit alpha</fullName>
    </alternativeName>
</protein>
<proteinExistence type="inferred from homology"/>
<sequence>MQLNSTEISELIKQRIAQFNVVSEAHNEGTIVSVSDGIIRIHGLAEVMQGEMIALPGNRFAIALNLERDSVGAVVMGPYADLAEGMKVKCTGRILEVPVGRGLLGRVVNTLGEPIDGKGAVEHDGFSPVEMIAPGVIDRQSVDQPVQTGYKSVDAMIPIGRGQRELIIGDRQTGKTALAVDAIINQRDSGIKCIYVAIGQKASTISNVVRKLEEHGALENTIVVVASASESAALQYLAPYAGCAMGEYFRDRGEDALIIYDDLSKQAVAYRQISLLLRRPPGREAYPGDVFYLHSRLLERAARVSAEYVENFTNGEVKGKTGSLTALPIIETQAGDVSAFVPTNVISITDGQIFLESNLFNAGIRPAVNPGISVSRVGGAAQTKIMKKLSGGIRTALAQYRELAAFSQFASDLDDATRKQLNHGQKVTELLKQKQYEPMSVAQQSLSLFAAERGYLEDVEISKVVPFEAALLAYASREHADLLKEINQTGTYNEEIEAKLKGVLDNFKATQSW</sequence>
<dbReference type="EC" id="7.1.2.2" evidence="1"/>
<dbReference type="EMBL" id="AM942759">
    <property type="protein sequence ID" value="CAR46018.1"/>
    <property type="molecule type" value="Genomic_DNA"/>
</dbReference>
<dbReference type="RefSeq" id="WP_004246592.1">
    <property type="nucleotide sequence ID" value="NC_010554.1"/>
</dbReference>
<dbReference type="SMR" id="B4F0E5"/>
<dbReference type="EnsemblBacteria" id="CAR46018">
    <property type="protein sequence ID" value="CAR46018"/>
    <property type="gene ID" value="PMI3062"/>
</dbReference>
<dbReference type="GeneID" id="6802463"/>
<dbReference type="KEGG" id="pmr:PMI3062"/>
<dbReference type="eggNOG" id="COG0056">
    <property type="taxonomic scope" value="Bacteria"/>
</dbReference>
<dbReference type="HOGENOM" id="CLU_010091_2_1_6"/>
<dbReference type="Proteomes" id="UP000008319">
    <property type="component" value="Chromosome"/>
</dbReference>
<dbReference type="GO" id="GO:0005886">
    <property type="term" value="C:plasma membrane"/>
    <property type="evidence" value="ECO:0007669"/>
    <property type="project" value="UniProtKB-SubCell"/>
</dbReference>
<dbReference type="GO" id="GO:0045259">
    <property type="term" value="C:proton-transporting ATP synthase complex"/>
    <property type="evidence" value="ECO:0007669"/>
    <property type="project" value="UniProtKB-KW"/>
</dbReference>
<dbReference type="GO" id="GO:0043531">
    <property type="term" value="F:ADP binding"/>
    <property type="evidence" value="ECO:0007669"/>
    <property type="project" value="TreeGrafter"/>
</dbReference>
<dbReference type="GO" id="GO:0005524">
    <property type="term" value="F:ATP binding"/>
    <property type="evidence" value="ECO:0007669"/>
    <property type="project" value="UniProtKB-UniRule"/>
</dbReference>
<dbReference type="GO" id="GO:0046933">
    <property type="term" value="F:proton-transporting ATP synthase activity, rotational mechanism"/>
    <property type="evidence" value="ECO:0007669"/>
    <property type="project" value="UniProtKB-UniRule"/>
</dbReference>
<dbReference type="CDD" id="cd18113">
    <property type="entry name" value="ATP-synt_F1_alpha_C"/>
    <property type="match status" value="1"/>
</dbReference>
<dbReference type="CDD" id="cd18116">
    <property type="entry name" value="ATP-synt_F1_alpha_N"/>
    <property type="match status" value="1"/>
</dbReference>
<dbReference type="CDD" id="cd01132">
    <property type="entry name" value="F1-ATPase_alpha_CD"/>
    <property type="match status" value="1"/>
</dbReference>
<dbReference type="FunFam" id="1.20.150.20:FF:000001">
    <property type="entry name" value="ATP synthase subunit alpha"/>
    <property type="match status" value="1"/>
</dbReference>
<dbReference type="FunFam" id="2.40.30.20:FF:000001">
    <property type="entry name" value="ATP synthase subunit alpha"/>
    <property type="match status" value="1"/>
</dbReference>
<dbReference type="FunFam" id="3.40.50.300:FF:000002">
    <property type="entry name" value="ATP synthase subunit alpha"/>
    <property type="match status" value="1"/>
</dbReference>
<dbReference type="Gene3D" id="2.40.30.20">
    <property type="match status" value="1"/>
</dbReference>
<dbReference type="Gene3D" id="1.20.150.20">
    <property type="entry name" value="ATP synthase alpha/beta chain, C-terminal domain"/>
    <property type="match status" value="1"/>
</dbReference>
<dbReference type="Gene3D" id="3.40.50.300">
    <property type="entry name" value="P-loop containing nucleotide triphosphate hydrolases"/>
    <property type="match status" value="1"/>
</dbReference>
<dbReference type="HAMAP" id="MF_01346">
    <property type="entry name" value="ATP_synth_alpha_bact"/>
    <property type="match status" value="1"/>
</dbReference>
<dbReference type="InterPro" id="IPR023366">
    <property type="entry name" value="ATP_synth_asu-like_sf"/>
</dbReference>
<dbReference type="InterPro" id="IPR000793">
    <property type="entry name" value="ATP_synth_asu_C"/>
</dbReference>
<dbReference type="InterPro" id="IPR038376">
    <property type="entry name" value="ATP_synth_asu_C_sf"/>
</dbReference>
<dbReference type="InterPro" id="IPR033732">
    <property type="entry name" value="ATP_synth_F1_a_nt-bd_dom"/>
</dbReference>
<dbReference type="InterPro" id="IPR005294">
    <property type="entry name" value="ATP_synth_F1_asu"/>
</dbReference>
<dbReference type="InterPro" id="IPR020003">
    <property type="entry name" value="ATPase_a/bsu_AS"/>
</dbReference>
<dbReference type="InterPro" id="IPR004100">
    <property type="entry name" value="ATPase_F1/V1/A1_a/bsu_N"/>
</dbReference>
<dbReference type="InterPro" id="IPR036121">
    <property type="entry name" value="ATPase_F1/V1/A1_a/bsu_N_sf"/>
</dbReference>
<dbReference type="InterPro" id="IPR000194">
    <property type="entry name" value="ATPase_F1/V1/A1_a/bsu_nucl-bd"/>
</dbReference>
<dbReference type="InterPro" id="IPR027417">
    <property type="entry name" value="P-loop_NTPase"/>
</dbReference>
<dbReference type="NCBIfam" id="TIGR00962">
    <property type="entry name" value="atpA"/>
    <property type="match status" value="1"/>
</dbReference>
<dbReference type="NCBIfam" id="NF009884">
    <property type="entry name" value="PRK13343.1"/>
    <property type="match status" value="1"/>
</dbReference>
<dbReference type="PANTHER" id="PTHR48082">
    <property type="entry name" value="ATP SYNTHASE SUBUNIT ALPHA, MITOCHONDRIAL"/>
    <property type="match status" value="1"/>
</dbReference>
<dbReference type="PANTHER" id="PTHR48082:SF2">
    <property type="entry name" value="ATP SYNTHASE SUBUNIT ALPHA, MITOCHONDRIAL"/>
    <property type="match status" value="1"/>
</dbReference>
<dbReference type="Pfam" id="PF00006">
    <property type="entry name" value="ATP-synt_ab"/>
    <property type="match status" value="1"/>
</dbReference>
<dbReference type="Pfam" id="PF00306">
    <property type="entry name" value="ATP-synt_ab_C"/>
    <property type="match status" value="1"/>
</dbReference>
<dbReference type="Pfam" id="PF02874">
    <property type="entry name" value="ATP-synt_ab_N"/>
    <property type="match status" value="1"/>
</dbReference>
<dbReference type="SUPFAM" id="SSF47917">
    <property type="entry name" value="C-terminal domain of alpha and beta subunits of F1 ATP synthase"/>
    <property type="match status" value="1"/>
</dbReference>
<dbReference type="SUPFAM" id="SSF50615">
    <property type="entry name" value="N-terminal domain of alpha and beta subunits of F1 ATP synthase"/>
    <property type="match status" value="1"/>
</dbReference>
<dbReference type="SUPFAM" id="SSF52540">
    <property type="entry name" value="P-loop containing nucleoside triphosphate hydrolases"/>
    <property type="match status" value="1"/>
</dbReference>
<dbReference type="PROSITE" id="PS00152">
    <property type="entry name" value="ATPASE_ALPHA_BETA"/>
    <property type="match status" value="1"/>
</dbReference>
<comment type="function">
    <text evidence="1">Produces ATP from ADP in the presence of a proton gradient across the membrane. The alpha chain is a regulatory subunit.</text>
</comment>
<comment type="catalytic activity">
    <reaction evidence="1">
        <text>ATP + H2O + 4 H(+)(in) = ADP + phosphate + 5 H(+)(out)</text>
        <dbReference type="Rhea" id="RHEA:57720"/>
        <dbReference type="ChEBI" id="CHEBI:15377"/>
        <dbReference type="ChEBI" id="CHEBI:15378"/>
        <dbReference type="ChEBI" id="CHEBI:30616"/>
        <dbReference type="ChEBI" id="CHEBI:43474"/>
        <dbReference type="ChEBI" id="CHEBI:456216"/>
        <dbReference type="EC" id="7.1.2.2"/>
    </reaction>
</comment>
<comment type="subunit">
    <text evidence="1">F-type ATPases have 2 components, CF(1) - the catalytic core - and CF(0) - the membrane proton channel. CF(1) has five subunits: alpha(3), beta(3), gamma(1), delta(1), epsilon(1). CF(0) has three main subunits: a(1), b(2) and c(9-12). The alpha and beta chains form an alternating ring which encloses part of the gamma chain. CF(1) is attached to CF(0) by a central stalk formed by the gamma and epsilon chains, while a peripheral stalk is formed by the delta and b chains.</text>
</comment>
<comment type="subcellular location">
    <subcellularLocation>
        <location evidence="1">Cell inner membrane</location>
        <topology evidence="1">Peripheral membrane protein</topology>
    </subcellularLocation>
</comment>
<comment type="similarity">
    <text evidence="1">Belongs to the ATPase alpha/beta chains family.</text>
</comment>
<accession>B4F0E5</accession>